<dbReference type="EMBL" id="Y14615">
    <property type="protein sequence ID" value="CAA74965.1"/>
    <property type="molecule type" value="mRNA"/>
</dbReference>
<dbReference type="EMBL" id="AL161543">
    <property type="status" value="NOT_ANNOTATED_CDS"/>
    <property type="molecule type" value="Genomic_DNA"/>
</dbReference>
<dbReference type="EMBL" id="CP002687">
    <property type="protein sequence ID" value="AEE83699.1"/>
    <property type="molecule type" value="Genomic_DNA"/>
</dbReference>
<dbReference type="EMBL" id="CP002687">
    <property type="protein sequence ID" value="AEE83700.1"/>
    <property type="molecule type" value="Genomic_DNA"/>
</dbReference>
<dbReference type="EMBL" id="AF361811">
    <property type="protein sequence ID" value="AAK32824.1"/>
    <property type="molecule type" value="mRNA"/>
</dbReference>
<dbReference type="EMBL" id="AY060529">
    <property type="protein sequence ID" value="AAL31160.1"/>
    <property type="molecule type" value="mRNA"/>
</dbReference>
<dbReference type="PIR" id="T52098">
    <property type="entry name" value="T52098"/>
</dbReference>
<dbReference type="SMR" id="F4JL11"/>
<dbReference type="FunCoup" id="F4JL11">
    <property type="interactions" value="4095"/>
</dbReference>
<dbReference type="IntAct" id="F4JL11">
    <property type="interactions" value="63"/>
</dbReference>
<dbReference type="STRING" id="3702.F4JL11"/>
<dbReference type="iPTMnet" id="F4JL11"/>
<dbReference type="PaxDb" id="3702-AT4G16143.2"/>
<dbReference type="ProteomicsDB" id="248538"/>
<dbReference type="EnsemblPlants" id="AT4G16143.1">
    <property type="protein sequence ID" value="AT4G16143.1"/>
    <property type="gene ID" value="AT4G16143"/>
</dbReference>
<dbReference type="EnsemblPlants" id="AT4G16143.2">
    <property type="protein sequence ID" value="AT4G16143.2"/>
    <property type="gene ID" value="AT4G16143"/>
</dbReference>
<dbReference type="Gramene" id="AT4G16143.1">
    <property type="protein sequence ID" value="AT4G16143.1"/>
    <property type="gene ID" value="AT4G16143"/>
</dbReference>
<dbReference type="Gramene" id="AT4G16143.2">
    <property type="protein sequence ID" value="AT4G16143.2"/>
    <property type="gene ID" value="AT4G16143"/>
</dbReference>
<dbReference type="KEGG" id="ath:AT4G16143"/>
<dbReference type="Araport" id="AT4G16143"/>
<dbReference type="TAIR" id="AT4G16143">
    <property type="gene designation" value="IMPA-2"/>
</dbReference>
<dbReference type="eggNOG" id="KOG0166">
    <property type="taxonomic scope" value="Eukaryota"/>
</dbReference>
<dbReference type="HOGENOM" id="CLU_018084_5_0_1"/>
<dbReference type="InParanoid" id="F4JL11"/>
<dbReference type="OMA" id="NCTLQXV"/>
<dbReference type="CD-CODE" id="4299E36E">
    <property type="entry name" value="Nucleolus"/>
</dbReference>
<dbReference type="PRO" id="PR:F4JL11"/>
<dbReference type="Proteomes" id="UP000006548">
    <property type="component" value="Chromosome 4"/>
</dbReference>
<dbReference type="ExpressionAtlas" id="F4JL11">
    <property type="expression patterns" value="baseline and differential"/>
</dbReference>
<dbReference type="GO" id="GO:0005829">
    <property type="term" value="C:cytosol"/>
    <property type="evidence" value="ECO:0007005"/>
    <property type="project" value="TAIR"/>
</dbReference>
<dbReference type="GO" id="GO:0005635">
    <property type="term" value="C:nuclear envelope"/>
    <property type="evidence" value="ECO:0007669"/>
    <property type="project" value="UniProtKB-SubCell"/>
</dbReference>
<dbReference type="GO" id="GO:0005730">
    <property type="term" value="C:nucleolus"/>
    <property type="evidence" value="ECO:0007005"/>
    <property type="project" value="TAIR"/>
</dbReference>
<dbReference type="GO" id="GO:0009506">
    <property type="term" value="C:plasmodesma"/>
    <property type="evidence" value="ECO:0007005"/>
    <property type="project" value="TAIR"/>
</dbReference>
<dbReference type="GO" id="GO:0061608">
    <property type="term" value="F:nuclear import signal receptor activity"/>
    <property type="evidence" value="ECO:0000315"/>
    <property type="project" value="UniProtKB"/>
</dbReference>
<dbReference type="GO" id="GO:0008139">
    <property type="term" value="F:nuclear localization sequence binding"/>
    <property type="evidence" value="ECO:0000315"/>
    <property type="project" value="UniProtKB"/>
</dbReference>
<dbReference type="GO" id="GO:0071555">
    <property type="term" value="P:cell wall organization"/>
    <property type="evidence" value="ECO:0000315"/>
    <property type="project" value="UniProtKB"/>
</dbReference>
<dbReference type="GO" id="GO:0006607">
    <property type="term" value="P:NLS-bearing protein import into nucleus"/>
    <property type="evidence" value="ECO:0000315"/>
    <property type="project" value="UniProtKB"/>
</dbReference>
<dbReference type="GO" id="GO:2000280">
    <property type="term" value="P:regulation of root development"/>
    <property type="evidence" value="ECO:0000315"/>
    <property type="project" value="UniProtKB"/>
</dbReference>
<dbReference type="GO" id="GO:0009651">
    <property type="term" value="P:response to salt stress"/>
    <property type="evidence" value="ECO:0000315"/>
    <property type="project" value="UniProtKB"/>
</dbReference>
<dbReference type="FunFam" id="1.20.5.690:FF:000002">
    <property type="entry name" value="Importin subunit alpha"/>
    <property type="match status" value="1"/>
</dbReference>
<dbReference type="FunFam" id="1.25.10.10:FF:000040">
    <property type="entry name" value="Importin subunit alpha"/>
    <property type="match status" value="1"/>
</dbReference>
<dbReference type="Gene3D" id="1.20.5.690">
    <property type="entry name" value="Importin-alpha, importin-beta-binding domain"/>
    <property type="match status" value="1"/>
</dbReference>
<dbReference type="Gene3D" id="1.25.10.10">
    <property type="entry name" value="Leucine-rich Repeat Variant"/>
    <property type="match status" value="1"/>
</dbReference>
<dbReference type="InterPro" id="IPR011989">
    <property type="entry name" value="ARM-like"/>
</dbReference>
<dbReference type="InterPro" id="IPR016024">
    <property type="entry name" value="ARM-type_fold"/>
</dbReference>
<dbReference type="InterPro" id="IPR032413">
    <property type="entry name" value="Arm_3"/>
</dbReference>
<dbReference type="InterPro" id="IPR000225">
    <property type="entry name" value="Armadillo"/>
</dbReference>
<dbReference type="InterPro" id="IPR002652">
    <property type="entry name" value="Importin-a_IBB"/>
</dbReference>
<dbReference type="InterPro" id="IPR036975">
    <property type="entry name" value="Importin-a_IBB_sf"/>
</dbReference>
<dbReference type="InterPro" id="IPR024931">
    <property type="entry name" value="Importin_alpha"/>
</dbReference>
<dbReference type="PANTHER" id="PTHR23316">
    <property type="entry name" value="IMPORTIN ALPHA"/>
    <property type="match status" value="1"/>
</dbReference>
<dbReference type="Pfam" id="PF00514">
    <property type="entry name" value="Arm"/>
    <property type="match status" value="8"/>
</dbReference>
<dbReference type="Pfam" id="PF16186">
    <property type="entry name" value="Arm_3"/>
    <property type="match status" value="1"/>
</dbReference>
<dbReference type="Pfam" id="PF01749">
    <property type="entry name" value="IBB"/>
    <property type="match status" value="1"/>
</dbReference>
<dbReference type="PIRSF" id="PIRSF005673">
    <property type="entry name" value="Importin_alpha"/>
    <property type="match status" value="1"/>
</dbReference>
<dbReference type="SMART" id="SM00185">
    <property type="entry name" value="ARM"/>
    <property type="match status" value="8"/>
</dbReference>
<dbReference type="SUPFAM" id="SSF48371">
    <property type="entry name" value="ARM repeat"/>
    <property type="match status" value="1"/>
</dbReference>
<dbReference type="PROSITE" id="PS50176">
    <property type="entry name" value="ARM_REPEAT"/>
    <property type="match status" value="5"/>
</dbReference>
<dbReference type="PROSITE" id="PS51214">
    <property type="entry name" value="IBB"/>
    <property type="match status" value="1"/>
</dbReference>
<protein>
    <recommendedName>
        <fullName evidence="9">Importin subunit alpha-2</fullName>
        <shortName evidence="8">IMPa-2</shortName>
    </recommendedName>
</protein>
<keyword id="KW-0539">Nucleus</keyword>
<keyword id="KW-0653">Protein transport</keyword>
<keyword id="KW-1185">Reference proteome</keyword>
<keyword id="KW-0677">Repeat</keyword>
<keyword id="KW-0813">Transport</keyword>
<comment type="function">
    <text evidence="5 7">Binds to conventional NLS motifs and mediates nuclear protein import across the nuclear envelope (PubMed:37676567). Involved in the maintenance of cell wall integrity under salt stress via interaction with SWO1 (PubMed:37676567). Acts as a cellular receptor for the nuclear import of the virD2 protein of Agrobacterium, but is not essential for Agrobacterium-mediated root transformation (PubMed:18836040).</text>
</comment>
<comment type="subunit">
    <text evidence="5 6 7">Forms a complex with the importin subunit beta-1 KPNB1 (PubMed:23582042). Interacts with A.tumefaciens VirD2 and VirE2 (PubMed:18836040). Binds to SWO1 (PubMed:37676567).</text>
</comment>
<comment type="interaction">
    <interactant intactId="EBI-1253508">
        <id>F4JL11</id>
    </interactant>
    <interactant intactId="EBI-15204728">
        <id>Q8L9K1</id>
        <label>ERF13</label>
    </interactant>
    <organismsDiffer>false</organismsDiffer>
    <experiments>3</experiments>
</comment>
<comment type="interaction">
    <interactant intactId="EBI-1253508">
        <id>F4JL11</id>
    </interactant>
    <interactant intactId="EBI-25513208">
        <id>Q39101</id>
        <label>FER1</label>
    </interactant>
    <organismsDiffer>false</organismsDiffer>
    <experiments>3</experiments>
</comment>
<comment type="interaction">
    <interactant intactId="EBI-1253508">
        <id>F4JL11</id>
    </interactant>
    <interactant intactId="EBI-2460434">
        <id>Q9LRH6</id>
        <label>GATA25</label>
    </interactant>
    <organismsDiffer>false</organismsDiffer>
    <experiments>3</experiments>
</comment>
<comment type="interaction">
    <interactant intactId="EBI-1253508">
        <id>F4JL11</id>
    </interactant>
    <interactant intactId="EBI-632243">
        <id>P93830</id>
        <label>IAA17</label>
    </interactant>
    <organismsDiffer>false</organismsDiffer>
    <experiments>3</experiments>
</comment>
<comment type="interaction">
    <interactant intactId="EBI-1253508">
        <id>F4JL11</id>
    </interactant>
    <interactant intactId="EBI-25506855">
        <id>O23160</id>
        <label>MYB73</label>
    </interactant>
    <organismsDiffer>false</organismsDiffer>
    <experiments>3</experiments>
</comment>
<comment type="interaction">
    <interactant intactId="EBI-1253508">
        <id>F4JL11</id>
    </interactant>
    <interactant intactId="EBI-15206004">
        <id>Q8GY55</id>
        <label>TIFY4B</label>
    </interactant>
    <organismsDiffer>false</organismsDiffer>
    <experiments>3</experiments>
</comment>
<comment type="subcellular location">
    <subcellularLocation>
        <location evidence="1">Nucleus envelope</location>
    </subcellularLocation>
</comment>
<comment type="disruption phenotype">
    <text evidence="7">The impa1 impa2 double mutant exhibits root growth inhibition under salt stress and reduced NLS-mediated import of nuclear proteins (PubMed:37676567). Salt-hypersensitivity is exacerbated in plants lacking also SWO1 (PubMed:37676567).</text>
</comment>
<comment type="similarity">
    <text evidence="9">Belongs to the importin alpha family.</text>
</comment>
<proteinExistence type="evidence at protein level"/>
<evidence type="ECO:0000250" key="1">
    <source>
        <dbReference type="UniProtKB" id="Q96321"/>
    </source>
</evidence>
<evidence type="ECO:0000255" key="2"/>
<evidence type="ECO:0000255" key="3">
    <source>
        <dbReference type="PROSITE-ProRule" id="PRU00561"/>
    </source>
</evidence>
<evidence type="ECO:0000256" key="4">
    <source>
        <dbReference type="SAM" id="MobiDB-lite"/>
    </source>
</evidence>
<evidence type="ECO:0000269" key="5">
    <source>
    </source>
</evidence>
<evidence type="ECO:0000269" key="6">
    <source>
    </source>
</evidence>
<evidence type="ECO:0000269" key="7">
    <source>
    </source>
</evidence>
<evidence type="ECO:0000303" key="8">
    <source>
    </source>
</evidence>
<evidence type="ECO:0000305" key="9"/>
<evidence type="ECO:0000312" key="10">
    <source>
        <dbReference type="Araport" id="AT4G16143"/>
    </source>
</evidence>
<reference key="1">
    <citation type="online journal article" date="1998" name="Plant Gene Register">
        <title>Characterization of four cDNAs encoding different importin alpha homologues from Arabidopsis thaliana, designated AtIMPa1-4.</title>
        <authorList>
            <person name="Schledz M."/>
            <person name="Leclerc D."/>
            <person name="Neuhaus G."/>
            <person name="Merkle T."/>
        </authorList>
        <locator>PGR98-022</locator>
    </citation>
    <scope>NUCLEOTIDE SEQUENCE [MRNA]</scope>
</reference>
<reference key="2">
    <citation type="journal article" date="1999" name="Nature">
        <title>Sequence and analysis of chromosome 4 of the plant Arabidopsis thaliana.</title>
        <authorList>
            <person name="Mayer K.F.X."/>
            <person name="Schueller C."/>
            <person name="Wambutt R."/>
            <person name="Murphy G."/>
            <person name="Volckaert G."/>
            <person name="Pohl T."/>
            <person name="Duesterhoeft A."/>
            <person name="Stiekema W."/>
            <person name="Entian K.-D."/>
            <person name="Terryn N."/>
            <person name="Harris B."/>
            <person name="Ansorge W."/>
            <person name="Brandt P."/>
            <person name="Grivell L.A."/>
            <person name="Rieger M."/>
            <person name="Weichselgartner M."/>
            <person name="de Simone V."/>
            <person name="Obermaier B."/>
            <person name="Mache R."/>
            <person name="Mueller M."/>
            <person name="Kreis M."/>
            <person name="Delseny M."/>
            <person name="Puigdomenech P."/>
            <person name="Watson M."/>
            <person name="Schmidtheini T."/>
            <person name="Reichert B."/>
            <person name="Portetelle D."/>
            <person name="Perez-Alonso M."/>
            <person name="Boutry M."/>
            <person name="Bancroft I."/>
            <person name="Vos P."/>
            <person name="Hoheisel J."/>
            <person name="Zimmermann W."/>
            <person name="Wedler H."/>
            <person name="Ridley P."/>
            <person name="Langham S.-A."/>
            <person name="McCullagh B."/>
            <person name="Bilham L."/>
            <person name="Robben J."/>
            <person name="van der Schueren J."/>
            <person name="Grymonprez B."/>
            <person name="Chuang Y.-J."/>
            <person name="Vandenbussche F."/>
            <person name="Braeken M."/>
            <person name="Weltjens I."/>
            <person name="Voet M."/>
            <person name="Bastiaens I."/>
            <person name="Aert R."/>
            <person name="Defoor E."/>
            <person name="Weitzenegger T."/>
            <person name="Bothe G."/>
            <person name="Ramsperger U."/>
            <person name="Hilbert H."/>
            <person name="Braun M."/>
            <person name="Holzer E."/>
            <person name="Brandt A."/>
            <person name="Peters S."/>
            <person name="van Staveren M."/>
            <person name="Dirkse W."/>
            <person name="Mooijman P."/>
            <person name="Klein Lankhorst R."/>
            <person name="Rose M."/>
            <person name="Hauf J."/>
            <person name="Koetter P."/>
            <person name="Berneiser S."/>
            <person name="Hempel S."/>
            <person name="Feldpausch M."/>
            <person name="Lamberth S."/>
            <person name="Van den Daele H."/>
            <person name="De Keyser A."/>
            <person name="Buysshaert C."/>
            <person name="Gielen J."/>
            <person name="Villarroel R."/>
            <person name="De Clercq R."/>
            <person name="van Montagu M."/>
            <person name="Rogers J."/>
            <person name="Cronin A."/>
            <person name="Quail M.A."/>
            <person name="Bray-Allen S."/>
            <person name="Clark L."/>
            <person name="Doggett J."/>
            <person name="Hall S."/>
            <person name="Kay M."/>
            <person name="Lennard N."/>
            <person name="McLay K."/>
            <person name="Mayes R."/>
            <person name="Pettett A."/>
            <person name="Rajandream M.A."/>
            <person name="Lyne M."/>
            <person name="Benes V."/>
            <person name="Rechmann S."/>
            <person name="Borkova D."/>
            <person name="Bloecker H."/>
            <person name="Scharfe M."/>
            <person name="Grimm M."/>
            <person name="Loehnert T.-H."/>
            <person name="Dose S."/>
            <person name="de Haan M."/>
            <person name="Maarse A.C."/>
            <person name="Schaefer M."/>
            <person name="Mueller-Auer S."/>
            <person name="Gabel C."/>
            <person name="Fuchs M."/>
            <person name="Fartmann B."/>
            <person name="Granderath K."/>
            <person name="Dauner D."/>
            <person name="Herzl A."/>
            <person name="Neumann S."/>
            <person name="Argiriou A."/>
            <person name="Vitale D."/>
            <person name="Liguori R."/>
            <person name="Piravandi E."/>
            <person name="Massenet O."/>
            <person name="Quigley F."/>
            <person name="Clabauld G."/>
            <person name="Muendlein A."/>
            <person name="Felber R."/>
            <person name="Schnabl S."/>
            <person name="Hiller R."/>
            <person name="Schmidt W."/>
            <person name="Lecharny A."/>
            <person name="Aubourg S."/>
            <person name="Chefdor F."/>
            <person name="Cooke R."/>
            <person name="Berger C."/>
            <person name="Monfort A."/>
            <person name="Casacuberta E."/>
            <person name="Gibbons T."/>
            <person name="Weber N."/>
            <person name="Vandenbol M."/>
            <person name="Bargues M."/>
            <person name="Terol J."/>
            <person name="Torres A."/>
            <person name="Perez-Perez A."/>
            <person name="Purnelle B."/>
            <person name="Bent E."/>
            <person name="Johnson S."/>
            <person name="Tacon D."/>
            <person name="Jesse T."/>
            <person name="Heijnen L."/>
            <person name="Schwarz S."/>
            <person name="Scholler P."/>
            <person name="Heber S."/>
            <person name="Francs P."/>
            <person name="Bielke C."/>
            <person name="Frishman D."/>
            <person name="Haase D."/>
            <person name="Lemcke K."/>
            <person name="Mewes H.-W."/>
            <person name="Stocker S."/>
            <person name="Zaccaria P."/>
            <person name="Bevan M."/>
            <person name="Wilson R.K."/>
            <person name="de la Bastide M."/>
            <person name="Habermann K."/>
            <person name="Parnell L."/>
            <person name="Dedhia N."/>
            <person name="Gnoj L."/>
            <person name="Schutz K."/>
            <person name="Huang E."/>
            <person name="Spiegel L."/>
            <person name="Sekhon M."/>
            <person name="Murray J."/>
            <person name="Sheet P."/>
            <person name="Cordes M."/>
            <person name="Abu-Threideh J."/>
            <person name="Stoneking T."/>
            <person name="Kalicki J."/>
            <person name="Graves T."/>
            <person name="Harmon G."/>
            <person name="Edwards J."/>
            <person name="Latreille P."/>
            <person name="Courtney L."/>
            <person name="Cloud J."/>
            <person name="Abbott A."/>
            <person name="Scott K."/>
            <person name="Johnson D."/>
            <person name="Minx P."/>
            <person name="Bentley D."/>
            <person name="Fulton B."/>
            <person name="Miller N."/>
            <person name="Greco T."/>
            <person name="Kemp K."/>
            <person name="Kramer J."/>
            <person name="Fulton L."/>
            <person name="Mardis E."/>
            <person name="Dante M."/>
            <person name="Pepin K."/>
            <person name="Hillier L.W."/>
            <person name="Nelson J."/>
            <person name="Spieth J."/>
            <person name="Ryan E."/>
            <person name="Andrews S."/>
            <person name="Geisel C."/>
            <person name="Layman D."/>
            <person name="Du H."/>
            <person name="Ali J."/>
            <person name="Berghoff A."/>
            <person name="Jones K."/>
            <person name="Drone K."/>
            <person name="Cotton M."/>
            <person name="Joshu C."/>
            <person name="Antonoiu B."/>
            <person name="Zidanic M."/>
            <person name="Strong C."/>
            <person name="Sun H."/>
            <person name="Lamar B."/>
            <person name="Yordan C."/>
            <person name="Ma P."/>
            <person name="Zhong J."/>
            <person name="Preston R."/>
            <person name="Vil D."/>
            <person name="Shekher M."/>
            <person name="Matero A."/>
            <person name="Shah R."/>
            <person name="Swaby I.K."/>
            <person name="O'Shaughnessy A."/>
            <person name="Rodriguez M."/>
            <person name="Hoffman J."/>
            <person name="Till S."/>
            <person name="Granat S."/>
            <person name="Shohdy N."/>
            <person name="Hasegawa A."/>
            <person name="Hameed A."/>
            <person name="Lodhi M."/>
            <person name="Johnson A."/>
            <person name="Chen E."/>
            <person name="Marra M.A."/>
            <person name="Martienssen R."/>
            <person name="McCombie W.R."/>
        </authorList>
    </citation>
    <scope>NUCLEOTIDE SEQUENCE [LARGE SCALE GENOMIC DNA]</scope>
    <source>
        <strain>cv. Columbia</strain>
    </source>
</reference>
<reference key="3">
    <citation type="journal article" date="2017" name="Plant J.">
        <title>Araport11: a complete reannotation of the Arabidopsis thaliana reference genome.</title>
        <authorList>
            <person name="Cheng C.Y."/>
            <person name="Krishnakumar V."/>
            <person name="Chan A.P."/>
            <person name="Thibaud-Nissen F."/>
            <person name="Schobel S."/>
            <person name="Town C.D."/>
        </authorList>
    </citation>
    <scope>GENOME REANNOTATION</scope>
    <source>
        <strain>cv. Columbia</strain>
    </source>
</reference>
<reference key="4">
    <citation type="journal article" date="2003" name="Science">
        <title>Empirical analysis of transcriptional activity in the Arabidopsis genome.</title>
        <authorList>
            <person name="Yamada K."/>
            <person name="Lim J."/>
            <person name="Dale J.M."/>
            <person name="Chen H."/>
            <person name="Shinn P."/>
            <person name="Palm C.J."/>
            <person name="Southwick A.M."/>
            <person name="Wu H.C."/>
            <person name="Kim C.J."/>
            <person name="Nguyen M."/>
            <person name="Pham P.K."/>
            <person name="Cheuk R.F."/>
            <person name="Karlin-Newmann G."/>
            <person name="Liu S.X."/>
            <person name="Lam B."/>
            <person name="Sakano H."/>
            <person name="Wu T."/>
            <person name="Yu G."/>
            <person name="Miranda M."/>
            <person name="Quach H.L."/>
            <person name="Tripp M."/>
            <person name="Chang C.H."/>
            <person name="Lee J.M."/>
            <person name="Toriumi M.J."/>
            <person name="Chan M.M."/>
            <person name="Tang C.C."/>
            <person name="Onodera C.S."/>
            <person name="Deng J.M."/>
            <person name="Akiyama K."/>
            <person name="Ansari Y."/>
            <person name="Arakawa T."/>
            <person name="Banh J."/>
            <person name="Banno F."/>
            <person name="Bowser L."/>
            <person name="Brooks S.Y."/>
            <person name="Carninci P."/>
            <person name="Chao Q."/>
            <person name="Choy N."/>
            <person name="Enju A."/>
            <person name="Goldsmith A.D."/>
            <person name="Gurjal M."/>
            <person name="Hansen N.F."/>
            <person name="Hayashizaki Y."/>
            <person name="Johnson-Hopson C."/>
            <person name="Hsuan V.W."/>
            <person name="Iida K."/>
            <person name="Karnes M."/>
            <person name="Khan S."/>
            <person name="Koesema E."/>
            <person name="Ishida J."/>
            <person name="Jiang P.X."/>
            <person name="Jones T."/>
            <person name="Kawai J."/>
            <person name="Kamiya A."/>
            <person name="Meyers C."/>
            <person name="Nakajima M."/>
            <person name="Narusaka M."/>
            <person name="Seki M."/>
            <person name="Sakurai T."/>
            <person name="Satou M."/>
            <person name="Tamse R."/>
            <person name="Vaysberg M."/>
            <person name="Wallender E.K."/>
            <person name="Wong C."/>
            <person name="Yamamura Y."/>
            <person name="Yuan S."/>
            <person name="Shinozaki K."/>
            <person name="Davis R.W."/>
            <person name="Theologis A."/>
            <person name="Ecker J.R."/>
        </authorList>
    </citation>
    <scope>NUCLEOTIDE SEQUENCE [LARGE SCALE MRNA]</scope>
    <source>
        <strain>cv. Columbia</strain>
    </source>
</reference>
<reference key="5">
    <citation type="journal article" date="2008" name="Plant Cell">
        <title>IMPa-4, an Arabidopsis importin alpha isoform, is preferentially involved in agrobacterium-mediated plant transformation.</title>
        <authorList>
            <person name="Bhattacharjee S."/>
            <person name="Lee L.Y."/>
            <person name="Oltmanns H."/>
            <person name="Cao H."/>
            <person name="Gupta V."/>
            <person name="Cuperus J."/>
            <person name="Gelvin S.B."/>
        </authorList>
    </citation>
    <scope>FUNCTION</scope>
    <scope>INTERACTION WITH AGROBACTERIUM VIRD2 AND VIRE2</scope>
    <scope>GENE FAMILY</scope>
</reference>
<reference key="6">
    <citation type="journal article" date="2013" name="Plant J.">
        <title>An Arabidopsis homolog of importin beta1 is required for ABA response and drought tolerance.</title>
        <authorList>
            <person name="Luo Y."/>
            <person name="Wang Z."/>
            <person name="Ji H."/>
            <person name="Fang H."/>
            <person name="Wang S."/>
            <person name="Tian L."/>
            <person name="Li X."/>
        </authorList>
    </citation>
    <scope>INTERACTION WITH KPNB1</scope>
</reference>
<reference key="7">
    <citation type="journal article" date="2021" name="Stress Biol.">
        <title>SWO1 modulates cell wall integrity under salt stress by interacting with importin alpha in Arabidopsis.</title>
        <authorList>
            <person name="Wang Z."/>
            <person name="Wang M."/>
            <person name="Yang C."/>
            <person name="Zhao L."/>
            <person name="Qin G."/>
            <person name="Peng L."/>
            <person name="Zheng Q."/>
            <person name="Nie W."/>
            <person name="Song C.-P."/>
            <person name="Shi H."/>
            <person name="Zhu J.-K."/>
            <person name="Zhao C."/>
        </authorList>
    </citation>
    <scope>FUNCTION</scope>
    <scope>DISRUPTION PHENOTYPE</scope>
    <scope>INTERACTION WITH SWO1</scope>
    <source>
        <strain>cv. Columbia</strain>
    </source>
</reference>
<sequence length="535" mass="58907">MSLRPNAKTEVRRNRYKVAVDAEEGRRRREDNMVEIRKSKREESLQKKRREGLQANQLPQFAPSPVPASSTVEKKLESLPAMVGGVWSDDRSLQLEATTQFRKLLSIERSPPIEEVIDAGVVPRFVEFLTREDYPQLQFEAAWALTNIASGTSENTKVVIEHGAVPIFVQLLASQSDDVREQAVWALGNVAGDSPRCRDLVLGQGALIPLLSQLNEHAKLSMLRNATWTLSNFCRGKPQPPFDQVRPALPALERLIHSTDEEVLTDACWALSYLSDGTNDKIQSVIEAGVVPRLVELLQHQSPSVLIPALRSIGNIVTGDDLQTQCVISHGALLSLLSLLTHNHKKSIKKEACWTISNITAGNRDQIQAVCEAGLICPLVNLLQNAEFDIKKEAAWAISNATSGGSPDQIKYMVEQGVVKPLCDLLVCPDPRIITVCLEGLENILKVGEAEKVTGNTGDVNFYAQLIDDAEGLEKIENLQSHDNSEIYEKAVKILETYWLEEEDETLPPGDPSAQGFQFGGGNDAAVPPGGFNFQ</sequence>
<organism>
    <name type="scientific">Arabidopsis thaliana</name>
    <name type="common">Mouse-ear cress</name>
    <dbReference type="NCBI Taxonomy" id="3702"/>
    <lineage>
        <taxon>Eukaryota</taxon>
        <taxon>Viridiplantae</taxon>
        <taxon>Streptophyta</taxon>
        <taxon>Embryophyta</taxon>
        <taxon>Tracheophyta</taxon>
        <taxon>Spermatophyta</taxon>
        <taxon>Magnoliopsida</taxon>
        <taxon>eudicotyledons</taxon>
        <taxon>Gunneridae</taxon>
        <taxon>Pentapetalae</taxon>
        <taxon>rosids</taxon>
        <taxon>malvids</taxon>
        <taxon>Brassicales</taxon>
        <taxon>Brassicaceae</taxon>
        <taxon>Camelineae</taxon>
        <taxon>Arabidopsis</taxon>
    </lineage>
</organism>
<feature type="chain" id="PRO_0000431569" description="Importin subunit alpha-2">
    <location>
        <begin position="1"/>
        <end position="535"/>
    </location>
</feature>
<feature type="domain" description="IBB" evidence="3">
    <location>
        <begin position="1"/>
        <end position="58"/>
    </location>
</feature>
<feature type="repeat" description="ARM 1" evidence="2">
    <location>
        <begin position="67"/>
        <end position="106"/>
    </location>
</feature>
<feature type="repeat" description="ARM 2" evidence="2">
    <location>
        <begin position="110"/>
        <end position="150"/>
    </location>
</feature>
<feature type="repeat" description="ARM 3" evidence="2">
    <location>
        <begin position="153"/>
        <end position="192"/>
    </location>
</feature>
<feature type="repeat" description="ARM 4" evidence="2">
    <location>
        <begin position="195"/>
        <end position="235"/>
    </location>
</feature>
<feature type="repeat" description="ARM 5" evidence="2">
    <location>
        <begin position="237"/>
        <end position="276"/>
    </location>
</feature>
<feature type="repeat" description="ARM 6" evidence="2">
    <location>
        <begin position="279"/>
        <end position="318"/>
    </location>
</feature>
<feature type="repeat" description="ARM 7" evidence="2">
    <location>
        <begin position="321"/>
        <end position="361"/>
    </location>
</feature>
<feature type="repeat" description="ARM 8" evidence="2">
    <location>
        <begin position="364"/>
        <end position="403"/>
    </location>
</feature>
<feature type="repeat" description="ARM 9" evidence="2">
    <location>
        <begin position="407"/>
        <end position="446"/>
    </location>
</feature>
<feature type="repeat" description="ARM 10" evidence="2">
    <location>
        <begin position="461"/>
        <end position="500"/>
    </location>
</feature>
<feature type="region of interest" description="Disordered" evidence="4">
    <location>
        <begin position="20"/>
        <end position="67"/>
    </location>
</feature>
<feature type="compositionally biased region" description="Basic and acidic residues" evidence="4">
    <location>
        <begin position="20"/>
        <end position="46"/>
    </location>
</feature>
<feature type="sequence conflict" description="In Ref. 1; CAA74965 and 4; AAK32824/AAL31160." evidence="9" ref="1 4">
    <original>P</original>
    <variation>S</variation>
    <location>
        <position position="65"/>
    </location>
</feature>
<feature type="sequence conflict" description="In Ref. 1; CAA74965." evidence="9" ref="1">
    <original>I</original>
    <variation>V</variation>
    <location>
        <position position="282"/>
    </location>
</feature>
<feature type="sequence conflict" description="In Ref. 1; CAA74965." evidence="9" ref="1">
    <original>I</original>
    <variation>N</variation>
    <location>
        <position position="316"/>
    </location>
</feature>
<feature type="sequence conflict" description="In Ref. 1; CAA74965." evidence="9" ref="1">
    <original>SHGALLSLLS</original>
    <variation>KSCAPPSLLG</variation>
    <location>
        <begin position="329"/>
        <end position="338"/>
    </location>
</feature>
<name>IMPA2_ARATH</name>
<accession>F4JL11</accession>
<accession>O49600</accession>
<accession>Q9ASV4</accession>
<gene>
    <name evidence="8" type="primary">IMPA2</name>
    <name evidence="10" type="ordered locus">At4g16143</name>
</gene>